<gene>
    <name evidence="1" type="primary">rpsD</name>
    <name type="ordered locus">Daci_1046</name>
</gene>
<protein>
    <recommendedName>
        <fullName evidence="1">Small ribosomal subunit protein uS4</fullName>
    </recommendedName>
    <alternativeName>
        <fullName evidence="3">30S ribosomal protein S4</fullName>
    </alternativeName>
</protein>
<organism>
    <name type="scientific">Delftia acidovorans (strain DSM 14801 / SPH-1)</name>
    <dbReference type="NCBI Taxonomy" id="398578"/>
    <lineage>
        <taxon>Bacteria</taxon>
        <taxon>Pseudomonadati</taxon>
        <taxon>Pseudomonadota</taxon>
        <taxon>Betaproteobacteria</taxon>
        <taxon>Burkholderiales</taxon>
        <taxon>Comamonadaceae</taxon>
        <taxon>Delftia</taxon>
    </lineage>
</organism>
<name>RS4_DELAS</name>
<sequence>MARYIGPKAKLSRREGTDLFLKSARRSIADKSKFDTKPGQHGRTSGQRTSDFGLQLREKQKVKRMYGVLEKQFRRYFEAADKKKGNTGANLLSLLESRLDNVVYRMGFGSTRSEARQLVSHKAITVNGQSVNIPSYMVKVGDVVAVREKSKKQARIVEALQLAGQVGFPAWVEVSADKAEGTFKKSPDRDEFGADINESLIVELYSR</sequence>
<accession>A9BRX4</accession>
<dbReference type="EMBL" id="CP000884">
    <property type="protein sequence ID" value="ABX33691.1"/>
    <property type="molecule type" value="Genomic_DNA"/>
</dbReference>
<dbReference type="RefSeq" id="WP_012202977.1">
    <property type="nucleotide sequence ID" value="NC_010002.1"/>
</dbReference>
<dbReference type="SMR" id="A9BRX4"/>
<dbReference type="STRING" id="398578.Daci_1046"/>
<dbReference type="GeneID" id="94695181"/>
<dbReference type="KEGG" id="dac:Daci_1046"/>
<dbReference type="eggNOG" id="COG0522">
    <property type="taxonomic scope" value="Bacteria"/>
</dbReference>
<dbReference type="HOGENOM" id="CLU_092403_0_2_4"/>
<dbReference type="Proteomes" id="UP000000784">
    <property type="component" value="Chromosome"/>
</dbReference>
<dbReference type="GO" id="GO:0015935">
    <property type="term" value="C:small ribosomal subunit"/>
    <property type="evidence" value="ECO:0007669"/>
    <property type="project" value="InterPro"/>
</dbReference>
<dbReference type="GO" id="GO:0019843">
    <property type="term" value="F:rRNA binding"/>
    <property type="evidence" value="ECO:0007669"/>
    <property type="project" value="UniProtKB-UniRule"/>
</dbReference>
<dbReference type="GO" id="GO:0003735">
    <property type="term" value="F:structural constituent of ribosome"/>
    <property type="evidence" value="ECO:0007669"/>
    <property type="project" value="InterPro"/>
</dbReference>
<dbReference type="GO" id="GO:0042274">
    <property type="term" value="P:ribosomal small subunit biogenesis"/>
    <property type="evidence" value="ECO:0007669"/>
    <property type="project" value="TreeGrafter"/>
</dbReference>
<dbReference type="GO" id="GO:0006412">
    <property type="term" value="P:translation"/>
    <property type="evidence" value="ECO:0007669"/>
    <property type="project" value="UniProtKB-UniRule"/>
</dbReference>
<dbReference type="CDD" id="cd00165">
    <property type="entry name" value="S4"/>
    <property type="match status" value="1"/>
</dbReference>
<dbReference type="FunFam" id="1.10.1050.10:FF:000001">
    <property type="entry name" value="30S ribosomal protein S4"/>
    <property type="match status" value="1"/>
</dbReference>
<dbReference type="FunFam" id="3.10.290.10:FF:000001">
    <property type="entry name" value="30S ribosomal protein S4"/>
    <property type="match status" value="1"/>
</dbReference>
<dbReference type="Gene3D" id="1.10.1050.10">
    <property type="entry name" value="Ribosomal Protein S4 Delta 41, Chain A, domain 1"/>
    <property type="match status" value="1"/>
</dbReference>
<dbReference type="Gene3D" id="3.10.290.10">
    <property type="entry name" value="RNA-binding S4 domain"/>
    <property type="match status" value="1"/>
</dbReference>
<dbReference type="HAMAP" id="MF_01306_B">
    <property type="entry name" value="Ribosomal_uS4_B"/>
    <property type="match status" value="1"/>
</dbReference>
<dbReference type="InterPro" id="IPR022801">
    <property type="entry name" value="Ribosomal_uS4"/>
</dbReference>
<dbReference type="InterPro" id="IPR005709">
    <property type="entry name" value="Ribosomal_uS4_bac-type"/>
</dbReference>
<dbReference type="InterPro" id="IPR018079">
    <property type="entry name" value="Ribosomal_uS4_CS"/>
</dbReference>
<dbReference type="InterPro" id="IPR001912">
    <property type="entry name" value="Ribosomal_uS4_N"/>
</dbReference>
<dbReference type="InterPro" id="IPR002942">
    <property type="entry name" value="S4_RNA-bd"/>
</dbReference>
<dbReference type="InterPro" id="IPR036986">
    <property type="entry name" value="S4_RNA-bd_sf"/>
</dbReference>
<dbReference type="NCBIfam" id="NF003717">
    <property type="entry name" value="PRK05327.1"/>
    <property type="match status" value="1"/>
</dbReference>
<dbReference type="NCBIfam" id="TIGR01017">
    <property type="entry name" value="rpsD_bact"/>
    <property type="match status" value="1"/>
</dbReference>
<dbReference type="PANTHER" id="PTHR11831">
    <property type="entry name" value="30S 40S RIBOSOMAL PROTEIN"/>
    <property type="match status" value="1"/>
</dbReference>
<dbReference type="PANTHER" id="PTHR11831:SF4">
    <property type="entry name" value="SMALL RIBOSOMAL SUBUNIT PROTEIN US4M"/>
    <property type="match status" value="1"/>
</dbReference>
<dbReference type="Pfam" id="PF00163">
    <property type="entry name" value="Ribosomal_S4"/>
    <property type="match status" value="1"/>
</dbReference>
<dbReference type="Pfam" id="PF01479">
    <property type="entry name" value="S4"/>
    <property type="match status" value="1"/>
</dbReference>
<dbReference type="SMART" id="SM01390">
    <property type="entry name" value="Ribosomal_S4"/>
    <property type="match status" value="1"/>
</dbReference>
<dbReference type="SMART" id="SM00363">
    <property type="entry name" value="S4"/>
    <property type="match status" value="1"/>
</dbReference>
<dbReference type="SUPFAM" id="SSF55174">
    <property type="entry name" value="Alpha-L RNA-binding motif"/>
    <property type="match status" value="1"/>
</dbReference>
<dbReference type="PROSITE" id="PS00632">
    <property type="entry name" value="RIBOSOMAL_S4"/>
    <property type="match status" value="1"/>
</dbReference>
<dbReference type="PROSITE" id="PS50889">
    <property type="entry name" value="S4"/>
    <property type="match status" value="1"/>
</dbReference>
<comment type="function">
    <text evidence="1">One of the primary rRNA binding proteins, it binds directly to 16S rRNA where it nucleates assembly of the body of the 30S subunit.</text>
</comment>
<comment type="function">
    <text evidence="1">With S5 and S12 plays an important role in translational accuracy.</text>
</comment>
<comment type="subunit">
    <text evidence="1">Part of the 30S ribosomal subunit. Contacts protein S5. The interaction surface between S4 and S5 is involved in control of translational fidelity.</text>
</comment>
<comment type="similarity">
    <text evidence="1">Belongs to the universal ribosomal protein uS4 family.</text>
</comment>
<evidence type="ECO:0000255" key="1">
    <source>
        <dbReference type="HAMAP-Rule" id="MF_01306"/>
    </source>
</evidence>
<evidence type="ECO:0000256" key="2">
    <source>
        <dbReference type="SAM" id="MobiDB-lite"/>
    </source>
</evidence>
<evidence type="ECO:0000305" key="3"/>
<keyword id="KW-1185">Reference proteome</keyword>
<keyword id="KW-0687">Ribonucleoprotein</keyword>
<keyword id="KW-0689">Ribosomal protein</keyword>
<keyword id="KW-0694">RNA-binding</keyword>
<keyword id="KW-0699">rRNA-binding</keyword>
<reference key="1">
    <citation type="submission" date="2007-11" db="EMBL/GenBank/DDBJ databases">
        <title>Complete sequence of Delftia acidovorans DSM 14801 / SPH-1.</title>
        <authorList>
            <person name="Copeland A."/>
            <person name="Lucas S."/>
            <person name="Lapidus A."/>
            <person name="Barry K."/>
            <person name="Glavina del Rio T."/>
            <person name="Dalin E."/>
            <person name="Tice H."/>
            <person name="Pitluck S."/>
            <person name="Lowry S."/>
            <person name="Clum A."/>
            <person name="Schmutz J."/>
            <person name="Larimer F."/>
            <person name="Land M."/>
            <person name="Hauser L."/>
            <person name="Kyrpides N."/>
            <person name="Kim E."/>
            <person name="Schleheck D."/>
            <person name="Richardson P."/>
        </authorList>
    </citation>
    <scope>NUCLEOTIDE SEQUENCE [LARGE SCALE GENOMIC DNA]</scope>
    <source>
        <strain>DSM 14801 / SPH-1</strain>
    </source>
</reference>
<feature type="chain" id="PRO_1000140717" description="Small ribosomal subunit protein uS4">
    <location>
        <begin position="1"/>
        <end position="207"/>
    </location>
</feature>
<feature type="domain" description="S4 RNA-binding" evidence="1">
    <location>
        <begin position="97"/>
        <end position="157"/>
    </location>
</feature>
<feature type="region of interest" description="Disordered" evidence="2">
    <location>
        <begin position="30"/>
        <end position="53"/>
    </location>
</feature>
<feature type="compositionally biased region" description="Polar residues" evidence="2">
    <location>
        <begin position="42"/>
        <end position="52"/>
    </location>
</feature>
<proteinExistence type="inferred from homology"/>